<dbReference type="EC" id="7.1.1.-" evidence="1"/>
<dbReference type="EMBL" id="CP001277">
    <property type="protein sequence ID" value="ACQ67256.1"/>
    <property type="molecule type" value="Genomic_DNA"/>
</dbReference>
<dbReference type="RefSeq" id="WP_012738213.1">
    <property type="nucleotide sequence ID" value="NC_012751.1"/>
</dbReference>
<dbReference type="SMR" id="C4K3W3"/>
<dbReference type="STRING" id="572265.HDEF_0502"/>
<dbReference type="GeneID" id="66260388"/>
<dbReference type="KEGG" id="hde:HDEF_0502"/>
<dbReference type="eggNOG" id="COG1007">
    <property type="taxonomic scope" value="Bacteria"/>
</dbReference>
<dbReference type="HOGENOM" id="CLU_007100_1_5_6"/>
<dbReference type="Proteomes" id="UP000002334">
    <property type="component" value="Chromosome"/>
</dbReference>
<dbReference type="GO" id="GO:0005886">
    <property type="term" value="C:plasma membrane"/>
    <property type="evidence" value="ECO:0007669"/>
    <property type="project" value="UniProtKB-SubCell"/>
</dbReference>
<dbReference type="GO" id="GO:0008137">
    <property type="term" value="F:NADH dehydrogenase (ubiquinone) activity"/>
    <property type="evidence" value="ECO:0007669"/>
    <property type="project" value="InterPro"/>
</dbReference>
<dbReference type="GO" id="GO:0050136">
    <property type="term" value="F:NADH:ubiquinone reductase (non-electrogenic) activity"/>
    <property type="evidence" value="ECO:0007669"/>
    <property type="project" value="UniProtKB-UniRule"/>
</dbReference>
<dbReference type="GO" id="GO:0048038">
    <property type="term" value="F:quinone binding"/>
    <property type="evidence" value="ECO:0007669"/>
    <property type="project" value="UniProtKB-KW"/>
</dbReference>
<dbReference type="GO" id="GO:0042773">
    <property type="term" value="P:ATP synthesis coupled electron transport"/>
    <property type="evidence" value="ECO:0007669"/>
    <property type="project" value="InterPro"/>
</dbReference>
<dbReference type="HAMAP" id="MF_00445">
    <property type="entry name" value="NDH1_NuoN_1"/>
    <property type="match status" value="1"/>
</dbReference>
<dbReference type="InterPro" id="IPR010096">
    <property type="entry name" value="NADH-Q_OxRdtase_suN/2"/>
</dbReference>
<dbReference type="InterPro" id="IPR001750">
    <property type="entry name" value="ND/Mrp_TM"/>
</dbReference>
<dbReference type="NCBIfam" id="TIGR01770">
    <property type="entry name" value="NDH_I_N"/>
    <property type="match status" value="1"/>
</dbReference>
<dbReference type="NCBIfam" id="NF004439">
    <property type="entry name" value="PRK05777.1-1"/>
    <property type="match status" value="1"/>
</dbReference>
<dbReference type="PANTHER" id="PTHR22773">
    <property type="entry name" value="NADH DEHYDROGENASE"/>
    <property type="match status" value="1"/>
</dbReference>
<dbReference type="Pfam" id="PF00361">
    <property type="entry name" value="Proton_antipo_M"/>
    <property type="match status" value="1"/>
</dbReference>
<comment type="function">
    <text evidence="1">NDH-1 shuttles electrons from NADH, via FMN and iron-sulfur (Fe-S) centers, to quinones in the respiratory chain. The immediate electron acceptor for the enzyme in this species is believed to be ubiquinone. Couples the redox reaction to proton translocation (for every two electrons transferred, four hydrogen ions are translocated across the cytoplasmic membrane), and thus conserves the redox energy in a proton gradient.</text>
</comment>
<comment type="catalytic activity">
    <reaction evidence="1">
        <text>a quinone + NADH + 5 H(+)(in) = a quinol + NAD(+) + 4 H(+)(out)</text>
        <dbReference type="Rhea" id="RHEA:57888"/>
        <dbReference type="ChEBI" id="CHEBI:15378"/>
        <dbReference type="ChEBI" id="CHEBI:24646"/>
        <dbReference type="ChEBI" id="CHEBI:57540"/>
        <dbReference type="ChEBI" id="CHEBI:57945"/>
        <dbReference type="ChEBI" id="CHEBI:132124"/>
    </reaction>
</comment>
<comment type="subunit">
    <text evidence="1">NDH-1 is composed of 13 different subunits. Subunits NuoA, H, J, K, L, M, N constitute the membrane sector of the complex.</text>
</comment>
<comment type="subcellular location">
    <subcellularLocation>
        <location evidence="1">Cell membrane</location>
        <topology evidence="1">Multi-pass membrane protein</topology>
    </subcellularLocation>
</comment>
<comment type="similarity">
    <text evidence="1">Belongs to the complex I subunit 2 family.</text>
</comment>
<sequence>MITSSQSALSGEMLMAMLPILIVAGTVVLLMLSIAWRRHHFFNGSLTVIGLNCALFSLYTVWGLFHFSQHDAINVTPLLRINGYSIFYSGLVILASLATCTFAYPWLQGYPDNREEFYLLLLISTLGALVLVSAQHLAAVFLGIELIALPLFGLLGYAYQQNRSLEASIKYFVLSAAASSFLLFGMAMLYAQTGGLSFTSLGNVFNEHVFSKPLILAGMGMILVGFGFKLSLVPFQLWTPDVYQGAPAPVTTFLGTVGKIALLAGVMRFFLYVPTFNVPGLNTALSFMAVASIFFGNLMALTQNNIKRLLGYSSIAHFGYLMIGLIALHQDPMVLERVAVYIVAYLFSSLGVLGVVSLMSSPYKGADAEALFSYRGLFWHRPILAAVMTIMLLSLAGIPMTLGFIAKFFLLLTAVNTHLWVLTATVVIGSAIALYYYLRITVSLFLSPPETLQRDTPKDWAFTAGGIVVWISALLVLVFGIYPQPLISFIKGFNALS</sequence>
<organism>
    <name type="scientific">Hamiltonella defensa subsp. Acyrthosiphon pisum (strain 5AT)</name>
    <dbReference type="NCBI Taxonomy" id="572265"/>
    <lineage>
        <taxon>Bacteria</taxon>
        <taxon>Pseudomonadati</taxon>
        <taxon>Pseudomonadota</taxon>
        <taxon>Gammaproteobacteria</taxon>
        <taxon>Enterobacterales</taxon>
        <taxon>Enterobacteriaceae</taxon>
        <taxon>aphid secondary symbionts</taxon>
        <taxon>Candidatus Hamiltonella</taxon>
    </lineage>
</organism>
<reference key="1">
    <citation type="journal article" date="2009" name="Proc. Natl. Acad. Sci. U.S.A.">
        <title>Hamiltonella defensa, genome evolution of protective bacterial endosymbiont from pathogenic ancestors.</title>
        <authorList>
            <person name="Degnan P.H."/>
            <person name="Yu Y."/>
            <person name="Sisneros N."/>
            <person name="Wing R.A."/>
            <person name="Moran N.A."/>
        </authorList>
    </citation>
    <scope>NUCLEOTIDE SEQUENCE [LARGE SCALE GENOMIC DNA]</scope>
    <source>
        <strain>5AT</strain>
    </source>
</reference>
<proteinExistence type="inferred from homology"/>
<gene>
    <name evidence="1" type="primary">nuoN</name>
    <name type="ordered locus">HDEF_0502</name>
</gene>
<evidence type="ECO:0000255" key="1">
    <source>
        <dbReference type="HAMAP-Rule" id="MF_00445"/>
    </source>
</evidence>
<name>NUON_HAMD5</name>
<feature type="chain" id="PRO_0000391158" description="NADH-quinone oxidoreductase subunit N">
    <location>
        <begin position="1"/>
        <end position="497"/>
    </location>
</feature>
<feature type="transmembrane region" description="Helical" evidence="1">
    <location>
        <begin position="14"/>
        <end position="34"/>
    </location>
</feature>
<feature type="transmembrane region" description="Helical" evidence="1">
    <location>
        <begin position="45"/>
        <end position="65"/>
    </location>
</feature>
<feature type="transmembrane region" description="Helical" evidence="1">
    <location>
        <begin position="86"/>
        <end position="106"/>
    </location>
</feature>
<feature type="transmembrane region" description="Helical" evidence="1">
    <location>
        <begin position="116"/>
        <end position="136"/>
    </location>
</feature>
<feature type="transmembrane region" description="Helical" evidence="1">
    <location>
        <begin position="137"/>
        <end position="157"/>
    </location>
</feature>
<feature type="transmembrane region" description="Helical" evidence="1">
    <location>
        <begin position="171"/>
        <end position="191"/>
    </location>
</feature>
<feature type="transmembrane region" description="Helical" evidence="1">
    <location>
        <begin position="215"/>
        <end position="235"/>
    </location>
</feature>
<feature type="transmembrane region" description="Helical" evidence="1">
    <location>
        <begin position="253"/>
        <end position="273"/>
    </location>
</feature>
<feature type="transmembrane region" description="Helical" evidence="1">
    <location>
        <begin position="281"/>
        <end position="301"/>
    </location>
</feature>
<feature type="transmembrane region" description="Helical" evidence="1">
    <location>
        <begin position="309"/>
        <end position="329"/>
    </location>
</feature>
<feature type="transmembrane region" description="Helical" evidence="1">
    <location>
        <begin position="338"/>
        <end position="358"/>
    </location>
</feature>
<feature type="transmembrane region" description="Helical" evidence="1">
    <location>
        <begin position="385"/>
        <end position="405"/>
    </location>
</feature>
<feature type="transmembrane region" description="Helical" evidence="1">
    <location>
        <begin position="420"/>
        <end position="439"/>
    </location>
</feature>
<feature type="transmembrane region" description="Helical" evidence="1">
    <location>
        <begin position="461"/>
        <end position="481"/>
    </location>
</feature>
<protein>
    <recommendedName>
        <fullName evidence="1">NADH-quinone oxidoreductase subunit N</fullName>
        <ecNumber evidence="1">7.1.1.-</ecNumber>
    </recommendedName>
    <alternativeName>
        <fullName evidence="1">NADH dehydrogenase I subunit N</fullName>
    </alternativeName>
    <alternativeName>
        <fullName evidence="1">NDH-1 subunit N</fullName>
    </alternativeName>
</protein>
<keyword id="KW-1003">Cell membrane</keyword>
<keyword id="KW-0472">Membrane</keyword>
<keyword id="KW-0520">NAD</keyword>
<keyword id="KW-0874">Quinone</keyword>
<keyword id="KW-1278">Translocase</keyword>
<keyword id="KW-0812">Transmembrane</keyword>
<keyword id="KW-1133">Transmembrane helix</keyword>
<keyword id="KW-0813">Transport</keyword>
<keyword id="KW-0830">Ubiquinone</keyword>
<accession>C4K3W3</accession>